<sequence>MLFISATNTNAGKTTCARLLAQYCNACGVKTILLKPIETGVNDAINHSSDAHLFLQDNRLLDRSLTLKDISFYRYHKVSAPLIAQQEEDPNAPIDTDNLTQRLHNFTKTYDLVIVEGAGGLCVPITLEENMLDFALKLKAKMLLISHDNLGLINDCLLNDFLLKSHQLDYKIAINLKGNNTAFHSISLPYIELFNTRSNNPIVIFQQSLKVLMSFALK</sequence>
<accession>O24872</accession>
<protein>
    <recommendedName>
        <fullName evidence="1">ATP-dependent dethiobiotin synthetase BioD</fullName>
        <ecNumber evidence="1">6.3.3.3</ecNumber>
    </recommendedName>
    <alternativeName>
        <fullName evidence="1">DTB synthetase</fullName>
        <shortName evidence="1">DTBS</shortName>
    </alternativeName>
    <alternativeName>
        <fullName evidence="1">Dethiobiotin synthase</fullName>
    </alternativeName>
</protein>
<dbReference type="EC" id="6.3.3.3" evidence="1"/>
<dbReference type="EMBL" id="AE000511">
    <property type="protein sequence ID" value="AAD07100.1"/>
    <property type="molecule type" value="Genomic_DNA"/>
</dbReference>
<dbReference type="PIR" id="E64523">
    <property type="entry name" value="E64523"/>
</dbReference>
<dbReference type="RefSeq" id="NP_206831.1">
    <property type="nucleotide sequence ID" value="NC_000915.1"/>
</dbReference>
<dbReference type="RefSeq" id="WP_000897490.1">
    <property type="nucleotide sequence ID" value="NC_018939.1"/>
</dbReference>
<dbReference type="PDB" id="2QMO">
    <property type="method" value="X-ray"/>
    <property type="resolution" value="1.47 A"/>
    <property type="chains" value="A=1-218"/>
</dbReference>
<dbReference type="PDB" id="3MLE">
    <property type="method" value="X-ray"/>
    <property type="resolution" value="2.80 A"/>
    <property type="chains" value="A/B/C/D/E/F=1-218"/>
</dbReference>
<dbReference type="PDB" id="3QXC">
    <property type="method" value="X-ray"/>
    <property type="resolution" value="1.34 A"/>
    <property type="chains" value="A=1-218"/>
</dbReference>
<dbReference type="PDB" id="3QXH">
    <property type="method" value="X-ray"/>
    <property type="resolution" value="1.36 A"/>
    <property type="chains" value="A=1-218"/>
</dbReference>
<dbReference type="PDB" id="3QXJ">
    <property type="method" value="X-ray"/>
    <property type="resolution" value="1.38 A"/>
    <property type="chains" value="A=1-218"/>
</dbReference>
<dbReference type="PDB" id="3QXS">
    <property type="method" value="X-ray"/>
    <property type="resolution" value="1.35 A"/>
    <property type="chains" value="A=1-218"/>
</dbReference>
<dbReference type="PDB" id="3QXX">
    <property type="method" value="X-ray"/>
    <property type="resolution" value="1.36 A"/>
    <property type="chains" value="A=1-218"/>
</dbReference>
<dbReference type="PDB" id="3QY0">
    <property type="method" value="X-ray"/>
    <property type="resolution" value="1.60 A"/>
    <property type="chains" value="A=1-218"/>
</dbReference>
<dbReference type="PDBsum" id="2QMO"/>
<dbReference type="PDBsum" id="3MLE"/>
<dbReference type="PDBsum" id="3QXC"/>
<dbReference type="PDBsum" id="3QXH"/>
<dbReference type="PDBsum" id="3QXJ"/>
<dbReference type="PDBsum" id="3QXS"/>
<dbReference type="PDBsum" id="3QXX"/>
<dbReference type="PDBsum" id="3QY0"/>
<dbReference type="SMR" id="O24872"/>
<dbReference type="FunCoup" id="O24872">
    <property type="interactions" value="290"/>
</dbReference>
<dbReference type="MINT" id="O24872"/>
<dbReference type="STRING" id="85962.HP_0029"/>
<dbReference type="PaxDb" id="85962-C694_00135"/>
<dbReference type="EnsemblBacteria" id="AAD07100">
    <property type="protein sequence ID" value="AAD07100"/>
    <property type="gene ID" value="HP_0029"/>
</dbReference>
<dbReference type="KEGG" id="heo:C694_00135"/>
<dbReference type="KEGG" id="hpy:HP_0029"/>
<dbReference type="PATRIC" id="fig|85962.47.peg.30"/>
<dbReference type="eggNOG" id="COG0132">
    <property type="taxonomic scope" value="Bacteria"/>
</dbReference>
<dbReference type="InParanoid" id="O24872"/>
<dbReference type="OrthoDB" id="9802097at2"/>
<dbReference type="PhylomeDB" id="O24872"/>
<dbReference type="UniPathway" id="UPA00078">
    <property type="reaction ID" value="UER00161"/>
</dbReference>
<dbReference type="EvolutionaryTrace" id="O24872"/>
<dbReference type="Proteomes" id="UP000000429">
    <property type="component" value="Chromosome"/>
</dbReference>
<dbReference type="GO" id="GO:0005829">
    <property type="term" value="C:cytosol"/>
    <property type="evidence" value="ECO:0000318"/>
    <property type="project" value="GO_Central"/>
</dbReference>
<dbReference type="GO" id="GO:0005524">
    <property type="term" value="F:ATP binding"/>
    <property type="evidence" value="ECO:0007669"/>
    <property type="project" value="UniProtKB-UniRule"/>
</dbReference>
<dbReference type="GO" id="GO:0004141">
    <property type="term" value="F:dethiobiotin synthase activity"/>
    <property type="evidence" value="ECO:0000250"/>
    <property type="project" value="UniProtKB"/>
</dbReference>
<dbReference type="GO" id="GO:0000287">
    <property type="term" value="F:magnesium ion binding"/>
    <property type="evidence" value="ECO:0007669"/>
    <property type="project" value="UniProtKB-UniRule"/>
</dbReference>
<dbReference type="GO" id="GO:0009102">
    <property type="term" value="P:biotin biosynthetic process"/>
    <property type="evidence" value="ECO:0000318"/>
    <property type="project" value="GO_Central"/>
</dbReference>
<dbReference type="CDD" id="cd03109">
    <property type="entry name" value="DTBS"/>
    <property type="match status" value="1"/>
</dbReference>
<dbReference type="FunFam" id="3.40.50.300:FF:003306">
    <property type="entry name" value="ATP-dependent dethiobiotin synthetase BioD"/>
    <property type="match status" value="1"/>
</dbReference>
<dbReference type="Gene3D" id="3.40.50.300">
    <property type="entry name" value="P-loop containing nucleotide triphosphate hydrolases"/>
    <property type="match status" value="1"/>
</dbReference>
<dbReference type="HAMAP" id="MF_00336">
    <property type="entry name" value="BioD"/>
    <property type="match status" value="1"/>
</dbReference>
<dbReference type="InterPro" id="IPR004472">
    <property type="entry name" value="DTB_synth_BioD"/>
</dbReference>
<dbReference type="InterPro" id="IPR027417">
    <property type="entry name" value="P-loop_NTPase"/>
</dbReference>
<dbReference type="NCBIfam" id="TIGR00347">
    <property type="entry name" value="bioD"/>
    <property type="match status" value="1"/>
</dbReference>
<dbReference type="PANTHER" id="PTHR43210:SF2">
    <property type="entry name" value="ATP-DEPENDENT DETHIOBIOTIN SYNTHETASE BIOD 2"/>
    <property type="match status" value="1"/>
</dbReference>
<dbReference type="PANTHER" id="PTHR43210">
    <property type="entry name" value="DETHIOBIOTIN SYNTHETASE"/>
    <property type="match status" value="1"/>
</dbReference>
<dbReference type="Pfam" id="PF13500">
    <property type="entry name" value="AAA_26"/>
    <property type="match status" value="1"/>
</dbReference>
<dbReference type="SUPFAM" id="SSF52540">
    <property type="entry name" value="P-loop containing nucleoside triphosphate hydrolases"/>
    <property type="match status" value="1"/>
</dbReference>
<reference key="1">
    <citation type="journal article" date="1997" name="Nature">
        <title>The complete genome sequence of the gastric pathogen Helicobacter pylori.</title>
        <authorList>
            <person name="Tomb J.-F."/>
            <person name="White O."/>
            <person name="Kerlavage A.R."/>
            <person name="Clayton R.A."/>
            <person name="Sutton G.G."/>
            <person name="Fleischmann R.D."/>
            <person name="Ketchum K.A."/>
            <person name="Klenk H.-P."/>
            <person name="Gill S.R."/>
            <person name="Dougherty B.A."/>
            <person name="Nelson K.E."/>
            <person name="Quackenbush J."/>
            <person name="Zhou L."/>
            <person name="Kirkness E.F."/>
            <person name="Peterson S.N."/>
            <person name="Loftus B.J."/>
            <person name="Richardson D.L."/>
            <person name="Dodson R.J."/>
            <person name="Khalak H.G."/>
            <person name="Glodek A."/>
            <person name="McKenney K."/>
            <person name="FitzGerald L.M."/>
            <person name="Lee N."/>
            <person name="Adams M.D."/>
            <person name="Hickey E.K."/>
            <person name="Berg D.E."/>
            <person name="Gocayne J.D."/>
            <person name="Utterback T.R."/>
            <person name="Peterson J.D."/>
            <person name="Kelley J.M."/>
            <person name="Cotton M.D."/>
            <person name="Weidman J.F."/>
            <person name="Fujii C."/>
            <person name="Bowman C."/>
            <person name="Watthey L."/>
            <person name="Wallin E."/>
            <person name="Hayes W.S."/>
            <person name="Borodovsky M."/>
            <person name="Karp P.D."/>
            <person name="Smith H.O."/>
            <person name="Fraser C.M."/>
            <person name="Venter J.C."/>
        </authorList>
    </citation>
    <scope>NUCLEOTIDE SEQUENCE [LARGE SCALE GENOMIC DNA]</scope>
    <source>
        <strain>ATCC 700392 / 26695</strain>
    </source>
</reference>
<reference evidence="4 5 6 7 8 9 10 11" key="2">
    <citation type="journal article" date="2012" name="FEBS J.">
        <title>Structural characterization of Helicobacter pylori dethiobiotin synthetase reveals differences between family members.</title>
        <authorList>
            <person name="Porebski P.J."/>
            <person name="Klimecka M."/>
            <person name="Chruszcz M."/>
            <person name="Nicholls R.A."/>
            <person name="Murzyn K."/>
            <person name="Cuff M.E."/>
            <person name="Xu X."/>
            <person name="Cymborowski M."/>
            <person name="Murshudov G.N."/>
            <person name="Savchenko A."/>
            <person name="Edwards A."/>
            <person name="Minor W."/>
        </authorList>
    </citation>
    <scope>X-RAY CRYSTALLOGRAPHY (1.34 ANGSTROMS) IN COMPLEX WITH NUCLEOTIDES; SUBSTRATE ANALOG; PHOSPHATE PRODUCT AND MAGNESIUM</scope>
    <scope>PROBABLE ACTIVE SITE</scope>
    <scope>COFACTOR</scope>
    <scope>SUBUNIT</scope>
    <scope>DOMAIN</scope>
</reference>
<keyword id="KW-0002">3D-structure</keyword>
<keyword id="KW-0067">ATP-binding</keyword>
<keyword id="KW-0093">Biotin biosynthesis</keyword>
<keyword id="KW-0963">Cytoplasm</keyword>
<keyword id="KW-0436">Ligase</keyword>
<keyword id="KW-0460">Magnesium</keyword>
<keyword id="KW-0479">Metal-binding</keyword>
<keyword id="KW-0547">Nucleotide-binding</keyword>
<keyword id="KW-1185">Reference proteome</keyword>
<organism>
    <name type="scientific">Helicobacter pylori (strain ATCC 700392 / 26695)</name>
    <name type="common">Campylobacter pylori</name>
    <dbReference type="NCBI Taxonomy" id="85962"/>
    <lineage>
        <taxon>Bacteria</taxon>
        <taxon>Pseudomonadati</taxon>
        <taxon>Campylobacterota</taxon>
        <taxon>Epsilonproteobacteria</taxon>
        <taxon>Campylobacterales</taxon>
        <taxon>Helicobacteraceae</taxon>
        <taxon>Helicobacter</taxon>
    </lineage>
</organism>
<name>BIOD_HELPY</name>
<gene>
    <name evidence="1" type="primary">bioD</name>
    <name type="ordered locus">HP_0029</name>
</gene>
<feature type="chain" id="PRO_0000187971" description="ATP-dependent dethiobiotin synthetase BioD">
    <location>
        <begin position="1"/>
        <end position="218"/>
    </location>
</feature>
<feature type="active site" evidence="1 3">
    <location>
        <position position="35"/>
    </location>
</feature>
<feature type="binding site" evidence="1 2 5 6 7 8 9">
    <location>
        <begin position="9"/>
        <end position="15"/>
    </location>
    <ligand>
        <name>ATP</name>
        <dbReference type="ChEBI" id="CHEBI:30616"/>
    </ligand>
</feature>
<feature type="binding site" evidence="1 2 5 6 7 8 9 10 11">
    <location>
        <position position="14"/>
    </location>
    <ligand>
        <name>Mg(2+)</name>
        <dbReference type="ChEBI" id="CHEBI:18420"/>
    </ligand>
</feature>
<feature type="binding site" evidence="2 5 7 10 11">
    <location>
        <position position="35"/>
    </location>
    <ligand>
        <name>phosphate</name>
        <dbReference type="ChEBI" id="CHEBI:43474"/>
    </ligand>
</feature>
<feature type="binding site" evidence="1 2">
    <location>
        <position position="39"/>
    </location>
    <ligand>
        <name>substrate</name>
    </ligand>
</feature>
<feature type="binding site" evidence="2 5 6 7 8 9">
    <location>
        <position position="50"/>
    </location>
    <ligand>
        <name>ATP</name>
        <dbReference type="ChEBI" id="CHEBI:30616"/>
    </ligand>
</feature>
<feature type="binding site" evidence="2 5 6 7 8 9 10 11">
    <location>
        <position position="50"/>
    </location>
    <ligand>
        <name>Mg(2+)</name>
        <dbReference type="ChEBI" id="CHEBI:18420"/>
    </ligand>
</feature>
<feature type="binding site" evidence="1">
    <location>
        <begin position="116"/>
        <end position="119"/>
    </location>
    <ligand>
        <name>ATP</name>
        <dbReference type="ChEBI" id="CHEBI:30616"/>
    </ligand>
</feature>
<feature type="binding site" evidence="5 7 10 11">
    <location>
        <begin position="116"/>
        <end position="119"/>
    </location>
    <ligand>
        <name>phosphate</name>
        <dbReference type="ChEBI" id="CHEBI:43474"/>
    </ligand>
</feature>
<feature type="binding site" evidence="2 6 8 9">
    <location>
        <position position="116"/>
    </location>
    <ligand>
        <name>ATP</name>
        <dbReference type="ChEBI" id="CHEBI:30616"/>
    </ligand>
</feature>
<feature type="binding site" evidence="1 2 5 6 7 8 9 10 11">
    <location>
        <position position="116"/>
    </location>
    <ligand>
        <name>Mg(2+)</name>
        <dbReference type="ChEBI" id="CHEBI:18420"/>
    </ligand>
</feature>
<feature type="binding site" evidence="2 5">
    <location>
        <begin position="151"/>
        <end position="154"/>
    </location>
    <ligand>
        <name>substrate</name>
    </ligand>
</feature>
<feature type="binding site" evidence="1 2 5 7">
    <location>
        <begin position="175"/>
        <end position="177"/>
    </location>
    <ligand>
        <name>ATP</name>
        <dbReference type="ChEBI" id="CHEBI:30616"/>
    </ligand>
</feature>
<feature type="binding site" evidence="2 6 9">
    <location>
        <position position="175"/>
    </location>
    <ligand>
        <name>ATP</name>
        <dbReference type="ChEBI" id="CHEBI:30616"/>
    </ligand>
</feature>
<feature type="strand" evidence="13">
    <location>
        <begin position="1"/>
        <end position="8"/>
    </location>
</feature>
<feature type="helix" evidence="13">
    <location>
        <begin position="13"/>
        <end position="26"/>
    </location>
</feature>
<feature type="strand" evidence="13">
    <location>
        <begin position="31"/>
        <end position="34"/>
    </location>
</feature>
<feature type="strand" evidence="12">
    <location>
        <begin position="37"/>
        <end position="40"/>
    </location>
</feature>
<feature type="turn" evidence="13">
    <location>
        <begin position="43"/>
        <end position="45"/>
    </location>
</feature>
<feature type="helix" evidence="13">
    <location>
        <begin position="50"/>
        <end position="59"/>
    </location>
</feature>
<feature type="helix" evidence="13">
    <location>
        <begin position="67"/>
        <end position="70"/>
    </location>
</feature>
<feature type="strand" evidence="13">
    <location>
        <begin position="76"/>
        <end position="79"/>
    </location>
</feature>
<feature type="helix" evidence="13">
    <location>
        <begin position="81"/>
        <end position="88"/>
    </location>
</feature>
<feature type="helix" evidence="13">
    <location>
        <begin position="96"/>
        <end position="105"/>
    </location>
</feature>
<feature type="helix" evidence="13">
    <location>
        <begin position="106"/>
        <end position="108"/>
    </location>
</feature>
<feature type="strand" evidence="13">
    <location>
        <begin position="111"/>
        <end position="116"/>
    </location>
</feature>
<feature type="strand" evidence="14">
    <location>
        <begin position="118"/>
        <end position="120"/>
    </location>
</feature>
<feature type="strand" evidence="13">
    <location>
        <begin position="124"/>
        <end position="128"/>
    </location>
</feature>
<feature type="helix" evidence="13">
    <location>
        <begin position="131"/>
        <end position="138"/>
    </location>
</feature>
<feature type="strand" evidence="13">
    <location>
        <begin position="141"/>
        <end position="146"/>
    </location>
</feature>
<feature type="helix" evidence="13">
    <location>
        <begin position="152"/>
        <end position="164"/>
    </location>
</feature>
<feature type="strand" evidence="13">
    <location>
        <begin position="166"/>
        <end position="168"/>
    </location>
</feature>
<feature type="strand" evidence="13">
    <location>
        <begin position="170"/>
        <end position="174"/>
    </location>
</feature>
<feature type="helix" evidence="13">
    <location>
        <begin position="182"/>
        <end position="186"/>
    </location>
</feature>
<feature type="helix" evidence="13">
    <location>
        <begin position="188"/>
        <end position="197"/>
    </location>
</feature>
<feature type="helix" evidence="13">
    <location>
        <begin position="205"/>
        <end position="207"/>
    </location>
</feature>
<feature type="helix" evidence="13">
    <location>
        <begin position="209"/>
        <end position="217"/>
    </location>
</feature>
<comment type="function">
    <text evidence="1">Catalyzes a mechanistically unusual reaction, the ATP-dependent insertion of CO2 between the N7 and N8 nitrogen atoms of 7,8-diaminopelargonic acid (DAPA, also called 7,8-diammoniononanoate) to form a ureido ring.</text>
</comment>
<comment type="catalytic activity">
    <reaction evidence="1">
        <text>(7R,8S)-7,8-diammoniononanoate + CO2 + ATP = (4R,5S)-dethiobiotin + ADP + phosphate + 3 H(+)</text>
        <dbReference type="Rhea" id="RHEA:15805"/>
        <dbReference type="ChEBI" id="CHEBI:15378"/>
        <dbReference type="ChEBI" id="CHEBI:16526"/>
        <dbReference type="ChEBI" id="CHEBI:30616"/>
        <dbReference type="ChEBI" id="CHEBI:43474"/>
        <dbReference type="ChEBI" id="CHEBI:149469"/>
        <dbReference type="ChEBI" id="CHEBI:149473"/>
        <dbReference type="ChEBI" id="CHEBI:456216"/>
        <dbReference type="EC" id="6.3.3.3"/>
    </reaction>
</comment>
<comment type="cofactor">
    <cofactor evidence="1 2">
        <name>Mg(2+)</name>
        <dbReference type="ChEBI" id="CHEBI:18420"/>
    </cofactor>
    <text evidence="2">Binds 1 Mg(2+) per subunit, in some structures a second Mg(2+) is also seen.</text>
</comment>
<comment type="pathway">
    <text evidence="1">Cofactor biosynthesis; biotin biosynthesis; biotin from 7,8-diaminononanoate: step 1/2.</text>
</comment>
<comment type="subunit">
    <text evidence="1 2">Homodimer.</text>
</comment>
<comment type="subcellular location">
    <subcellularLocation>
        <location evidence="1">Cytoplasm</location>
    </subcellularLocation>
</comment>
<comment type="domain">
    <text evidence="2">Substrate binds in a cavity formed at the dimer interface.</text>
</comment>
<comment type="similarity">
    <text evidence="1">Belongs to the dethiobiotin synthetase family.</text>
</comment>
<proteinExistence type="evidence at protein level"/>
<evidence type="ECO:0000255" key="1">
    <source>
        <dbReference type="HAMAP-Rule" id="MF_00336"/>
    </source>
</evidence>
<evidence type="ECO:0000269" key="2">
    <source>
    </source>
</evidence>
<evidence type="ECO:0000305" key="3">
    <source>
    </source>
</evidence>
<evidence type="ECO:0007744" key="4">
    <source>
        <dbReference type="PDB" id="2QMO"/>
    </source>
</evidence>
<evidence type="ECO:0007744" key="5">
    <source>
        <dbReference type="PDB" id="3MLE"/>
    </source>
</evidence>
<evidence type="ECO:0007744" key="6">
    <source>
        <dbReference type="PDB" id="3QXC"/>
    </source>
</evidence>
<evidence type="ECO:0007744" key="7">
    <source>
        <dbReference type="PDB" id="3QXH"/>
    </source>
</evidence>
<evidence type="ECO:0007744" key="8">
    <source>
        <dbReference type="PDB" id="3QXJ"/>
    </source>
</evidence>
<evidence type="ECO:0007744" key="9">
    <source>
        <dbReference type="PDB" id="3QXS"/>
    </source>
</evidence>
<evidence type="ECO:0007744" key="10">
    <source>
        <dbReference type="PDB" id="3QXX"/>
    </source>
</evidence>
<evidence type="ECO:0007744" key="11">
    <source>
        <dbReference type="PDB" id="3QY0"/>
    </source>
</evidence>
<evidence type="ECO:0007829" key="12">
    <source>
        <dbReference type="PDB" id="3MLE"/>
    </source>
</evidence>
<evidence type="ECO:0007829" key="13">
    <source>
        <dbReference type="PDB" id="3QXC"/>
    </source>
</evidence>
<evidence type="ECO:0007829" key="14">
    <source>
        <dbReference type="PDB" id="3QXH"/>
    </source>
</evidence>